<organism>
    <name type="scientific">Streptococcus thermophilus (strain ATCC BAA-250 / LMG 18311)</name>
    <dbReference type="NCBI Taxonomy" id="264199"/>
    <lineage>
        <taxon>Bacteria</taxon>
        <taxon>Bacillati</taxon>
        <taxon>Bacillota</taxon>
        <taxon>Bacilli</taxon>
        <taxon>Lactobacillales</taxon>
        <taxon>Streptococcaceae</taxon>
        <taxon>Streptococcus</taxon>
    </lineage>
</organism>
<proteinExistence type="inferred from homology"/>
<gene>
    <name evidence="1" type="primary">nadE</name>
    <name type="ordered locus">stu0227</name>
</gene>
<protein>
    <recommendedName>
        <fullName evidence="1">NH(3)-dependent NAD(+) synthetase</fullName>
        <ecNumber evidence="1">6.3.1.5</ecNumber>
    </recommendedName>
</protein>
<dbReference type="EC" id="6.3.1.5" evidence="1"/>
<dbReference type="EMBL" id="CP000023">
    <property type="protein sequence ID" value="AAV59952.1"/>
    <property type="molecule type" value="Genomic_DNA"/>
</dbReference>
<dbReference type="RefSeq" id="WP_002949400.1">
    <property type="nucleotide sequence ID" value="NC_006448.1"/>
</dbReference>
<dbReference type="SMR" id="Q5M652"/>
<dbReference type="STRING" id="264199.stu0227"/>
<dbReference type="GeneID" id="66898158"/>
<dbReference type="KEGG" id="stl:stu0227"/>
<dbReference type="eggNOG" id="COG0171">
    <property type="taxonomic scope" value="Bacteria"/>
</dbReference>
<dbReference type="HOGENOM" id="CLU_059327_3_0_9"/>
<dbReference type="UniPathway" id="UPA00253">
    <property type="reaction ID" value="UER00333"/>
</dbReference>
<dbReference type="Proteomes" id="UP000001170">
    <property type="component" value="Chromosome"/>
</dbReference>
<dbReference type="GO" id="GO:0005737">
    <property type="term" value="C:cytoplasm"/>
    <property type="evidence" value="ECO:0007669"/>
    <property type="project" value="InterPro"/>
</dbReference>
<dbReference type="GO" id="GO:0005524">
    <property type="term" value="F:ATP binding"/>
    <property type="evidence" value="ECO:0007669"/>
    <property type="project" value="UniProtKB-UniRule"/>
</dbReference>
<dbReference type="GO" id="GO:0004359">
    <property type="term" value="F:glutaminase activity"/>
    <property type="evidence" value="ECO:0007669"/>
    <property type="project" value="InterPro"/>
</dbReference>
<dbReference type="GO" id="GO:0046872">
    <property type="term" value="F:metal ion binding"/>
    <property type="evidence" value="ECO:0007669"/>
    <property type="project" value="UniProtKB-KW"/>
</dbReference>
<dbReference type="GO" id="GO:0003952">
    <property type="term" value="F:NAD+ synthase (glutamine-hydrolyzing) activity"/>
    <property type="evidence" value="ECO:0007669"/>
    <property type="project" value="InterPro"/>
</dbReference>
<dbReference type="GO" id="GO:0008795">
    <property type="term" value="F:NAD+ synthase activity"/>
    <property type="evidence" value="ECO:0007669"/>
    <property type="project" value="UniProtKB-UniRule"/>
</dbReference>
<dbReference type="GO" id="GO:0009435">
    <property type="term" value="P:NAD biosynthetic process"/>
    <property type="evidence" value="ECO:0007669"/>
    <property type="project" value="UniProtKB-UniRule"/>
</dbReference>
<dbReference type="CDD" id="cd00553">
    <property type="entry name" value="NAD_synthase"/>
    <property type="match status" value="1"/>
</dbReference>
<dbReference type="FunFam" id="3.40.50.620:FF:000015">
    <property type="entry name" value="NH(3)-dependent NAD(+) synthetase"/>
    <property type="match status" value="1"/>
</dbReference>
<dbReference type="Gene3D" id="3.40.50.620">
    <property type="entry name" value="HUPs"/>
    <property type="match status" value="1"/>
</dbReference>
<dbReference type="HAMAP" id="MF_00193">
    <property type="entry name" value="NadE_ammonia_dep"/>
    <property type="match status" value="1"/>
</dbReference>
<dbReference type="InterPro" id="IPR022310">
    <property type="entry name" value="NAD/GMP_synthase"/>
</dbReference>
<dbReference type="InterPro" id="IPR003694">
    <property type="entry name" value="NAD_synthase"/>
</dbReference>
<dbReference type="InterPro" id="IPR022926">
    <property type="entry name" value="NH(3)-dep_NAD(+)_synth"/>
</dbReference>
<dbReference type="InterPro" id="IPR014729">
    <property type="entry name" value="Rossmann-like_a/b/a_fold"/>
</dbReference>
<dbReference type="NCBIfam" id="TIGR00552">
    <property type="entry name" value="nadE"/>
    <property type="match status" value="1"/>
</dbReference>
<dbReference type="NCBIfam" id="NF001979">
    <property type="entry name" value="PRK00768.1"/>
    <property type="match status" value="1"/>
</dbReference>
<dbReference type="PANTHER" id="PTHR23090">
    <property type="entry name" value="NH 3 /GLUTAMINE-DEPENDENT NAD + SYNTHETASE"/>
    <property type="match status" value="1"/>
</dbReference>
<dbReference type="PANTHER" id="PTHR23090:SF7">
    <property type="entry name" value="NH(3)-DEPENDENT NAD(+) SYNTHETASE"/>
    <property type="match status" value="1"/>
</dbReference>
<dbReference type="Pfam" id="PF02540">
    <property type="entry name" value="NAD_synthase"/>
    <property type="match status" value="1"/>
</dbReference>
<dbReference type="SUPFAM" id="SSF52402">
    <property type="entry name" value="Adenine nucleotide alpha hydrolases-like"/>
    <property type="match status" value="1"/>
</dbReference>
<feature type="chain" id="PRO_1000077632" description="NH(3)-dependent NAD(+) synthetase">
    <location>
        <begin position="1"/>
        <end position="273"/>
    </location>
</feature>
<feature type="binding site" evidence="1">
    <location>
        <begin position="46"/>
        <end position="53"/>
    </location>
    <ligand>
        <name>ATP</name>
        <dbReference type="ChEBI" id="CHEBI:30616"/>
    </ligand>
</feature>
<feature type="binding site" evidence="1">
    <location>
        <position position="52"/>
    </location>
    <ligand>
        <name>Mg(2+)</name>
        <dbReference type="ChEBI" id="CHEBI:18420"/>
    </ligand>
</feature>
<feature type="binding site" evidence="1">
    <location>
        <position position="139"/>
    </location>
    <ligand>
        <name>deamido-NAD(+)</name>
        <dbReference type="ChEBI" id="CHEBI:58437"/>
    </ligand>
</feature>
<feature type="binding site" evidence="1">
    <location>
        <position position="159"/>
    </location>
    <ligand>
        <name>ATP</name>
        <dbReference type="ChEBI" id="CHEBI:30616"/>
    </ligand>
</feature>
<feature type="binding site" evidence="1">
    <location>
        <position position="164"/>
    </location>
    <ligand>
        <name>Mg(2+)</name>
        <dbReference type="ChEBI" id="CHEBI:18420"/>
    </ligand>
</feature>
<feature type="binding site" evidence="1">
    <location>
        <position position="172"/>
    </location>
    <ligand>
        <name>deamido-NAD(+)</name>
        <dbReference type="ChEBI" id="CHEBI:58437"/>
    </ligand>
</feature>
<feature type="binding site" evidence="1">
    <location>
        <position position="179"/>
    </location>
    <ligand>
        <name>deamido-NAD(+)</name>
        <dbReference type="ChEBI" id="CHEBI:58437"/>
    </ligand>
</feature>
<feature type="binding site" evidence="1">
    <location>
        <position position="188"/>
    </location>
    <ligand>
        <name>ATP</name>
        <dbReference type="ChEBI" id="CHEBI:30616"/>
    </ligand>
</feature>
<feature type="binding site" evidence="1">
    <location>
        <position position="210"/>
    </location>
    <ligand>
        <name>ATP</name>
        <dbReference type="ChEBI" id="CHEBI:30616"/>
    </ligand>
</feature>
<feature type="binding site" evidence="1">
    <location>
        <begin position="259"/>
        <end position="260"/>
    </location>
    <ligand>
        <name>deamido-NAD(+)</name>
        <dbReference type="ChEBI" id="CHEBI:58437"/>
    </ligand>
</feature>
<keyword id="KW-0067">ATP-binding</keyword>
<keyword id="KW-0436">Ligase</keyword>
<keyword id="KW-0460">Magnesium</keyword>
<keyword id="KW-0479">Metal-binding</keyword>
<keyword id="KW-0520">NAD</keyword>
<keyword id="KW-0547">Nucleotide-binding</keyword>
<keyword id="KW-1185">Reference proteome</keyword>
<sequence>MTLQETIIAQLGVKPSINPKEEIRKSVDFLKAYMIKHPFLKTYVLGISGGQDSTLAGRLAQLAVEELRAETEKDYQFIAIRLPYGVQADEDDAQRALAFIKPDVSLTINIKEAVDGQVAELAKAGVNVSDFNKGNIKARQRMITQYAVAGENSGAVIGTDHAAENLTGFFTKFGDGGADILPLFRLNKRQGAALLAELGADKALYEKVPTADLEEDKPGIADEVALGVTYHEIDDYLEGKEVSAKAQETIETWWRKGQHKRHLPITIFDDFWK</sequence>
<name>NADE_STRT2</name>
<evidence type="ECO:0000255" key="1">
    <source>
        <dbReference type="HAMAP-Rule" id="MF_00193"/>
    </source>
</evidence>
<accession>Q5M652</accession>
<comment type="function">
    <text evidence="1">Catalyzes the ATP-dependent amidation of deamido-NAD to form NAD. Uses ammonia as a nitrogen source.</text>
</comment>
<comment type="catalytic activity">
    <reaction evidence="1">
        <text>deamido-NAD(+) + NH4(+) + ATP = AMP + diphosphate + NAD(+) + H(+)</text>
        <dbReference type="Rhea" id="RHEA:21188"/>
        <dbReference type="ChEBI" id="CHEBI:15378"/>
        <dbReference type="ChEBI" id="CHEBI:28938"/>
        <dbReference type="ChEBI" id="CHEBI:30616"/>
        <dbReference type="ChEBI" id="CHEBI:33019"/>
        <dbReference type="ChEBI" id="CHEBI:57540"/>
        <dbReference type="ChEBI" id="CHEBI:58437"/>
        <dbReference type="ChEBI" id="CHEBI:456215"/>
        <dbReference type="EC" id="6.3.1.5"/>
    </reaction>
</comment>
<comment type="pathway">
    <text evidence="1">Cofactor biosynthesis; NAD(+) biosynthesis; NAD(+) from deamido-NAD(+) (ammonia route): step 1/1.</text>
</comment>
<comment type="subunit">
    <text evidence="1">Homodimer.</text>
</comment>
<comment type="similarity">
    <text evidence="1">Belongs to the NAD synthetase family.</text>
</comment>
<reference key="1">
    <citation type="journal article" date="2004" name="Nat. Biotechnol.">
        <title>Complete sequence and comparative genome analysis of the dairy bacterium Streptococcus thermophilus.</title>
        <authorList>
            <person name="Bolotin A."/>
            <person name="Quinquis B."/>
            <person name="Renault P."/>
            <person name="Sorokin A."/>
            <person name="Ehrlich S.D."/>
            <person name="Kulakauskas S."/>
            <person name="Lapidus A."/>
            <person name="Goltsman E."/>
            <person name="Mazur M."/>
            <person name="Pusch G.D."/>
            <person name="Fonstein M."/>
            <person name="Overbeek R."/>
            <person name="Kyprides N."/>
            <person name="Purnelle B."/>
            <person name="Prozzi D."/>
            <person name="Ngui K."/>
            <person name="Masuy D."/>
            <person name="Hancy F."/>
            <person name="Burteau S."/>
            <person name="Boutry M."/>
            <person name="Delcour J."/>
            <person name="Goffeau A."/>
            <person name="Hols P."/>
        </authorList>
    </citation>
    <scope>NUCLEOTIDE SEQUENCE [LARGE SCALE GENOMIC DNA]</scope>
    <source>
        <strain>ATCC BAA-250 / LMG 18311</strain>
    </source>
</reference>